<organism>
    <name type="scientific">Rattus norvegicus</name>
    <name type="common">Rat</name>
    <dbReference type="NCBI Taxonomy" id="10116"/>
    <lineage>
        <taxon>Eukaryota</taxon>
        <taxon>Metazoa</taxon>
        <taxon>Chordata</taxon>
        <taxon>Craniata</taxon>
        <taxon>Vertebrata</taxon>
        <taxon>Euteleostomi</taxon>
        <taxon>Mammalia</taxon>
        <taxon>Eutheria</taxon>
        <taxon>Euarchontoglires</taxon>
        <taxon>Glires</taxon>
        <taxon>Rodentia</taxon>
        <taxon>Myomorpha</taxon>
        <taxon>Muroidea</taxon>
        <taxon>Muridae</taxon>
        <taxon>Murinae</taxon>
        <taxon>Rattus</taxon>
    </lineage>
</organism>
<dbReference type="EMBL" id="X78327">
    <property type="protein sequence ID" value="CAA55130.1"/>
    <property type="molecule type" value="mRNA"/>
</dbReference>
<dbReference type="EMBL" id="BC058143">
    <property type="protein sequence ID" value="AAH58143.1"/>
    <property type="molecule type" value="mRNA"/>
</dbReference>
<dbReference type="PIR" id="JC2368">
    <property type="entry name" value="JC2368"/>
</dbReference>
<dbReference type="RefSeq" id="NP_112363.2">
    <property type="nucleotide sequence ID" value="NM_031101.2"/>
</dbReference>
<dbReference type="PDB" id="7QGG">
    <property type="method" value="EM"/>
    <property type="resolution" value="2.86 A"/>
    <property type="chains" value="M=1-211"/>
</dbReference>
<dbReference type="PDBsum" id="7QGG"/>
<dbReference type="EMDB" id="EMD-13954"/>
<dbReference type="SMR" id="P41123"/>
<dbReference type="BioGRID" id="249637">
    <property type="interactions" value="5"/>
</dbReference>
<dbReference type="FunCoup" id="P41123">
    <property type="interactions" value="3146"/>
</dbReference>
<dbReference type="IntAct" id="P41123">
    <property type="interactions" value="8"/>
</dbReference>
<dbReference type="MINT" id="P41123"/>
<dbReference type="STRING" id="10116.ENSRNOP00000020635"/>
<dbReference type="iPTMnet" id="P41123"/>
<dbReference type="PhosphoSitePlus" id="P41123"/>
<dbReference type="jPOST" id="P41123"/>
<dbReference type="PaxDb" id="10116-ENSRNOP00000020635"/>
<dbReference type="Ensembl" id="ENSRNOT00000020635.7">
    <property type="protein sequence ID" value="ENSRNOP00000020635.3"/>
    <property type="gene ID" value="ENSRNOG00000015335.7"/>
</dbReference>
<dbReference type="GeneID" id="81765"/>
<dbReference type="KEGG" id="rno:81765"/>
<dbReference type="UCSC" id="RGD:621179">
    <property type="organism name" value="rat"/>
</dbReference>
<dbReference type="AGR" id="RGD:621179"/>
<dbReference type="CTD" id="6137"/>
<dbReference type="RGD" id="621179">
    <property type="gene designation" value="Rpl13"/>
</dbReference>
<dbReference type="eggNOG" id="KOG3295">
    <property type="taxonomic scope" value="Eukaryota"/>
</dbReference>
<dbReference type="GeneTree" id="ENSGT00390000007818"/>
<dbReference type="HOGENOM" id="CLU_075696_1_0_1"/>
<dbReference type="InParanoid" id="P41123"/>
<dbReference type="OMA" id="IQKNHFR"/>
<dbReference type="OrthoDB" id="10264538at2759"/>
<dbReference type="PhylomeDB" id="P41123"/>
<dbReference type="TreeFam" id="TF300073"/>
<dbReference type="Reactome" id="R-RNO-156827">
    <property type="pathway name" value="L13a-mediated translational silencing of Ceruloplasmin expression"/>
</dbReference>
<dbReference type="Reactome" id="R-RNO-1799339">
    <property type="pathway name" value="SRP-dependent cotranslational protein targeting to membrane"/>
</dbReference>
<dbReference type="Reactome" id="R-RNO-6791226">
    <property type="pathway name" value="Major pathway of rRNA processing in the nucleolus and cytosol"/>
</dbReference>
<dbReference type="Reactome" id="R-RNO-72689">
    <property type="pathway name" value="Formation of a pool of free 40S subunits"/>
</dbReference>
<dbReference type="Reactome" id="R-RNO-72706">
    <property type="pathway name" value="GTP hydrolysis and joining of the 60S ribosomal subunit"/>
</dbReference>
<dbReference type="Reactome" id="R-RNO-975956">
    <property type="pathway name" value="Nonsense Mediated Decay (NMD) independent of the Exon Junction Complex (EJC)"/>
</dbReference>
<dbReference type="Reactome" id="R-RNO-975957">
    <property type="pathway name" value="Nonsense Mediated Decay (NMD) enhanced by the Exon Junction Complex (EJC)"/>
</dbReference>
<dbReference type="PRO" id="PR:P41123"/>
<dbReference type="Proteomes" id="UP000002494">
    <property type="component" value="Chromosome 19"/>
</dbReference>
<dbReference type="Bgee" id="ENSRNOG00000015335">
    <property type="expression patterns" value="Expressed in ovary and 9 other cell types or tissues"/>
</dbReference>
<dbReference type="GO" id="GO:0005737">
    <property type="term" value="C:cytoplasm"/>
    <property type="evidence" value="ECO:0000266"/>
    <property type="project" value="RGD"/>
</dbReference>
<dbReference type="GO" id="GO:0005829">
    <property type="term" value="C:cytosol"/>
    <property type="evidence" value="ECO:0000266"/>
    <property type="project" value="RGD"/>
</dbReference>
<dbReference type="GO" id="GO:0022625">
    <property type="term" value="C:cytosolic large ribosomal subunit"/>
    <property type="evidence" value="ECO:0000314"/>
    <property type="project" value="RGD"/>
</dbReference>
<dbReference type="GO" id="GO:0022626">
    <property type="term" value="C:cytosolic ribosome"/>
    <property type="evidence" value="ECO:0000266"/>
    <property type="project" value="RGD"/>
</dbReference>
<dbReference type="GO" id="GO:0045202">
    <property type="term" value="C:synapse"/>
    <property type="evidence" value="ECO:0000266"/>
    <property type="project" value="RGD"/>
</dbReference>
<dbReference type="GO" id="GO:0003723">
    <property type="term" value="F:RNA binding"/>
    <property type="evidence" value="ECO:0000318"/>
    <property type="project" value="GO_Central"/>
</dbReference>
<dbReference type="GO" id="GO:0003735">
    <property type="term" value="F:structural constituent of ribosome"/>
    <property type="evidence" value="ECO:0000266"/>
    <property type="project" value="RGD"/>
</dbReference>
<dbReference type="GO" id="GO:0001824">
    <property type="term" value="P:blastocyst development"/>
    <property type="evidence" value="ECO:0000266"/>
    <property type="project" value="RGD"/>
</dbReference>
<dbReference type="GO" id="GO:0060348">
    <property type="term" value="P:bone development"/>
    <property type="evidence" value="ECO:0000266"/>
    <property type="project" value="RGD"/>
</dbReference>
<dbReference type="GO" id="GO:0097421">
    <property type="term" value="P:liver regeneration"/>
    <property type="evidence" value="ECO:0000270"/>
    <property type="project" value="RGD"/>
</dbReference>
<dbReference type="GO" id="GO:0006412">
    <property type="term" value="P:translation"/>
    <property type="evidence" value="ECO:0000303"/>
    <property type="project" value="UniProtKB"/>
</dbReference>
<dbReference type="FunFam" id="1.20.5.110:FF:000003">
    <property type="entry name" value="60S ribosomal protein L13"/>
    <property type="match status" value="1"/>
</dbReference>
<dbReference type="Gene3D" id="1.20.5.110">
    <property type="match status" value="1"/>
</dbReference>
<dbReference type="HAMAP" id="MF_00499">
    <property type="entry name" value="Ribosomal_eL13"/>
    <property type="match status" value="1"/>
</dbReference>
<dbReference type="InterPro" id="IPR001380">
    <property type="entry name" value="Ribosomal_eL13"/>
</dbReference>
<dbReference type="InterPro" id="IPR018256">
    <property type="entry name" value="Ribosomal_eL13_CS"/>
</dbReference>
<dbReference type="PANTHER" id="PTHR11722">
    <property type="entry name" value="60S RIBOSOMAL PROTEIN L13"/>
    <property type="match status" value="1"/>
</dbReference>
<dbReference type="PANTHER" id="PTHR11722:SF0">
    <property type="entry name" value="LARGE RIBOSOMAL SUBUNIT PROTEIN EL13"/>
    <property type="match status" value="1"/>
</dbReference>
<dbReference type="Pfam" id="PF01294">
    <property type="entry name" value="Ribosomal_L13e"/>
    <property type="match status" value="1"/>
</dbReference>
<dbReference type="PROSITE" id="PS01104">
    <property type="entry name" value="RIBOSOMAL_L13E"/>
    <property type="match status" value="1"/>
</dbReference>
<evidence type="ECO:0000250" key="1">
    <source>
        <dbReference type="UniProtKB" id="P26373"/>
    </source>
</evidence>
<evidence type="ECO:0000305" key="2"/>
<protein>
    <recommendedName>
        <fullName evidence="2">Large ribosomal subunit protein eL13</fullName>
    </recommendedName>
    <alternativeName>
        <fullName>60S ribosomal protein L13</fullName>
    </alternativeName>
</protein>
<accession>P41123</accession>
<reference key="1">
    <citation type="journal article" date="1994" name="Biochem. Biophys. Res. Commun.">
        <title>The primary structure of rat ribosomal protein L13.</title>
        <authorList>
            <person name="Olvera J."/>
            <person name="Wool I.G."/>
        </authorList>
    </citation>
    <scope>NUCLEOTIDE SEQUENCE [MRNA]</scope>
    <scope>PARTIAL PROTEIN SEQUENCE</scope>
    <source>
        <strain>Sprague-Dawley</strain>
        <tissue>Liver</tissue>
    </source>
</reference>
<reference key="2">
    <citation type="journal article" date="2004" name="Genome Res.">
        <title>The status, quality, and expansion of the NIH full-length cDNA project: the Mammalian Gene Collection (MGC).</title>
        <authorList>
            <consortium name="The MGC Project Team"/>
        </authorList>
    </citation>
    <scope>NUCLEOTIDE SEQUENCE [LARGE SCALE MRNA]</scope>
    <source>
        <tissue>Pituitary</tissue>
    </source>
</reference>
<gene>
    <name type="primary">Rpl13</name>
</gene>
<name>RL13_RAT</name>
<proteinExistence type="evidence at protein level"/>
<comment type="function">
    <text evidence="1">Component of the ribosome, a large ribonucleoprotein complex responsible for the synthesis of proteins in the cell. The small ribosomal subunit (SSU) binds messenger RNAs (mRNAs) and translates the encoded message by selecting cognate aminoacyl-transfer RNA (tRNA) molecules. The large subunit (LSU) contains the ribosomal catalytic site termed the peptidyl transferase center (PTC), which catalyzes the formation of peptide bonds, thereby polymerizing the amino acids delivered by tRNAs into a polypeptide chain. The nascent polypeptides leave the ribosome through a tunnel in the LSU and interact with protein factors that function in enzymatic processing, targeting, and the membrane insertion of nascent chains at the exit of the ribosomal tunnel. As part of the LSU, it is probably required for its formation and the maturation of rRNAs. Plays a role in bone development.</text>
</comment>
<comment type="subunit">
    <text evidence="1">Component of the 60S large ribosomal subunit (LSU).</text>
</comment>
<comment type="subcellular location">
    <subcellularLocation>
        <location evidence="1">Cytoplasm</location>
    </subcellularLocation>
</comment>
<comment type="similarity">
    <text evidence="2">Belongs to the eukaryotic ribosomal protein eL13 family.</text>
</comment>
<sequence length="211" mass="24309">MAPSRNGMILKPHFHKDWQQRVDTWFNQPARKIRRRKARQAKARRIAPRPASGPIRPIVRCPTVRYHTKVRAGRGFSLEELRVAGIHKKMARTIGISVDPRRRNKSTESLQANVQRLKEYRSKLILFPRKPSAPKKGDSSAEELKLATQLTGPVMPIRNVYKKEKARAITEEEKNFKAFASLRMARANARLFGIRAKRAKEAAEQDVEKKK</sequence>
<keyword id="KW-0002">3D-structure</keyword>
<keyword id="KW-0007">Acetylation</keyword>
<keyword id="KW-0963">Cytoplasm</keyword>
<keyword id="KW-0903">Direct protein sequencing</keyword>
<keyword id="KW-1017">Isopeptide bond</keyword>
<keyword id="KW-0597">Phosphoprotein</keyword>
<keyword id="KW-1185">Reference proteome</keyword>
<keyword id="KW-0687">Ribonucleoprotein</keyword>
<keyword id="KW-0689">Ribosomal protein</keyword>
<keyword id="KW-0832">Ubl conjugation</keyword>
<feature type="chain" id="PRO_0000192921" description="Large ribosomal subunit protein eL13">
    <location>
        <begin position="1"/>
        <end position="211"/>
    </location>
</feature>
<feature type="modified residue" description="N6-acetyllysine" evidence="1">
    <location>
        <position position="16"/>
    </location>
</feature>
<feature type="modified residue" description="Phosphoserine" evidence="1">
    <location>
        <position position="52"/>
    </location>
</feature>
<feature type="modified residue" description="Phosphoserine" evidence="1">
    <location>
        <position position="77"/>
    </location>
</feature>
<feature type="modified residue" description="Phosphoserine" evidence="1">
    <location>
        <position position="106"/>
    </location>
</feature>
<feature type="modified residue" description="N6-acetyllysine; alternate" evidence="1">
    <location>
        <position position="177"/>
    </location>
</feature>
<feature type="cross-link" description="Glycyl lysine isopeptide (Lys-Gly) (interchain with G-Cter in SUMO2)" evidence="1">
    <location>
        <position position="123"/>
    </location>
</feature>
<feature type="cross-link" description="Glycyl lysine isopeptide (Lys-Gly) (interchain with G-Cter in SUMO2)" evidence="1">
    <location>
        <position position="145"/>
    </location>
</feature>
<feature type="cross-link" description="Glycyl lysine isopeptide (Lys-Gly) (interchain with G-Cter in SUMO1); alternate" evidence="1">
    <location>
        <position position="174"/>
    </location>
</feature>
<feature type="cross-link" description="Glycyl lysine isopeptide (Lys-Gly) (interchain with G-Cter in SUMO2); alternate" evidence="1">
    <location>
        <position position="174"/>
    </location>
</feature>
<feature type="cross-link" description="Glycyl lysine isopeptide (Lys-Gly) (interchain with G-Cter in SUMO2); alternate" evidence="1">
    <location>
        <position position="177"/>
    </location>
</feature>
<feature type="sequence conflict" description="In Ref. 1; CAA55130." evidence="2" ref="1">
    <original>R</original>
    <variation>S</variation>
    <location>
        <position position="56"/>
    </location>
</feature>